<accession>A0KEX3</accession>
<reference key="1">
    <citation type="journal article" date="2006" name="J. Bacteriol.">
        <title>Genome sequence of Aeromonas hydrophila ATCC 7966T: jack of all trades.</title>
        <authorList>
            <person name="Seshadri R."/>
            <person name="Joseph S.W."/>
            <person name="Chopra A.K."/>
            <person name="Sha J."/>
            <person name="Shaw J."/>
            <person name="Graf J."/>
            <person name="Haft D.H."/>
            <person name="Wu M."/>
            <person name="Ren Q."/>
            <person name="Rosovitz M.J."/>
            <person name="Madupu R."/>
            <person name="Tallon L."/>
            <person name="Kim M."/>
            <person name="Jin S."/>
            <person name="Vuong H."/>
            <person name="Stine O.C."/>
            <person name="Ali A."/>
            <person name="Horneman A.J."/>
            <person name="Heidelberg J.F."/>
        </authorList>
    </citation>
    <scope>NUCLEOTIDE SEQUENCE [LARGE SCALE GENOMIC DNA]</scope>
    <source>
        <strain>ATCC 7966 / DSM 30187 / BCRC 13018 / CCUG 14551 / JCM 1027 / KCTC 2358 / NCIMB 9240 / NCTC 8049</strain>
    </source>
</reference>
<name>SMG_AERHH</name>
<comment type="similarity">
    <text evidence="1">Belongs to the Smg family.</text>
</comment>
<sequence length="157" mass="18213">MFDVLMYLFETYIHSDADVMVEQNELTDELSRAGFDKDEIEKALNWLERLANLHDSEREVYVAASAQGSMRIYAPQELARLSTECRGFLLFLEQAQVLNAETREICIERLLELDKPDIELDDLKWVVMMVLFNVPGSENAYQQMEELVFDESDGVIH</sequence>
<organism>
    <name type="scientific">Aeromonas hydrophila subsp. hydrophila (strain ATCC 7966 / DSM 30187 / BCRC 13018 / CCUG 14551 / JCM 1027 / KCTC 2358 / NCIMB 9240 / NCTC 8049)</name>
    <dbReference type="NCBI Taxonomy" id="380703"/>
    <lineage>
        <taxon>Bacteria</taxon>
        <taxon>Pseudomonadati</taxon>
        <taxon>Pseudomonadota</taxon>
        <taxon>Gammaproteobacteria</taxon>
        <taxon>Aeromonadales</taxon>
        <taxon>Aeromonadaceae</taxon>
        <taxon>Aeromonas</taxon>
    </lineage>
</organism>
<evidence type="ECO:0000255" key="1">
    <source>
        <dbReference type="HAMAP-Rule" id="MF_00598"/>
    </source>
</evidence>
<protein>
    <recommendedName>
        <fullName evidence="1">Protein Smg homolog</fullName>
    </recommendedName>
</protein>
<dbReference type="EMBL" id="CP000462">
    <property type="protein sequence ID" value="ABK39398.1"/>
    <property type="molecule type" value="Genomic_DNA"/>
</dbReference>
<dbReference type="RefSeq" id="WP_011704269.1">
    <property type="nucleotide sequence ID" value="NC_008570.1"/>
</dbReference>
<dbReference type="RefSeq" id="YP_854789.1">
    <property type="nucleotide sequence ID" value="NC_008570.1"/>
</dbReference>
<dbReference type="SMR" id="A0KEX3"/>
<dbReference type="STRING" id="380703.AHA_0261"/>
<dbReference type="EnsemblBacteria" id="ABK39398">
    <property type="protein sequence ID" value="ABK39398"/>
    <property type="gene ID" value="AHA_0261"/>
</dbReference>
<dbReference type="GeneID" id="4490192"/>
<dbReference type="KEGG" id="aha:AHA_0261"/>
<dbReference type="PATRIC" id="fig|380703.7.peg.248"/>
<dbReference type="eggNOG" id="COG2922">
    <property type="taxonomic scope" value="Bacteria"/>
</dbReference>
<dbReference type="HOGENOM" id="CLU_133242_0_0_6"/>
<dbReference type="OrthoDB" id="9788984at2"/>
<dbReference type="Proteomes" id="UP000000756">
    <property type="component" value="Chromosome"/>
</dbReference>
<dbReference type="HAMAP" id="MF_00598">
    <property type="entry name" value="Smg"/>
    <property type="match status" value="1"/>
</dbReference>
<dbReference type="InterPro" id="IPR007456">
    <property type="entry name" value="Smg"/>
</dbReference>
<dbReference type="NCBIfam" id="NF002897">
    <property type="entry name" value="PRK03430.1"/>
    <property type="match status" value="1"/>
</dbReference>
<dbReference type="PANTHER" id="PTHR38692">
    <property type="entry name" value="PROTEIN SMG"/>
    <property type="match status" value="1"/>
</dbReference>
<dbReference type="PANTHER" id="PTHR38692:SF1">
    <property type="entry name" value="PROTEIN SMG"/>
    <property type="match status" value="1"/>
</dbReference>
<dbReference type="Pfam" id="PF04361">
    <property type="entry name" value="DUF494"/>
    <property type="match status" value="1"/>
</dbReference>
<gene>
    <name evidence="1" type="primary">smg</name>
    <name type="ordered locus">AHA_0261</name>
</gene>
<keyword id="KW-1185">Reference proteome</keyword>
<proteinExistence type="inferred from homology"/>
<feature type="chain" id="PRO_1000025642" description="Protein Smg homolog">
    <location>
        <begin position="1"/>
        <end position="157"/>
    </location>
</feature>